<accession>A4ST06</accession>
<name>RL3_AERS4</name>
<keyword id="KW-0488">Methylation</keyword>
<keyword id="KW-0687">Ribonucleoprotein</keyword>
<keyword id="KW-0689">Ribosomal protein</keyword>
<keyword id="KW-0694">RNA-binding</keyword>
<keyword id="KW-0699">rRNA-binding</keyword>
<protein>
    <recommendedName>
        <fullName evidence="1">Large ribosomal subunit protein uL3</fullName>
    </recommendedName>
    <alternativeName>
        <fullName evidence="3">50S ribosomal protein L3</fullName>
    </alternativeName>
</protein>
<evidence type="ECO:0000255" key="1">
    <source>
        <dbReference type="HAMAP-Rule" id="MF_01325"/>
    </source>
</evidence>
<evidence type="ECO:0000256" key="2">
    <source>
        <dbReference type="SAM" id="MobiDB-lite"/>
    </source>
</evidence>
<evidence type="ECO:0000305" key="3"/>
<reference key="1">
    <citation type="journal article" date="2008" name="BMC Genomics">
        <title>The genome of Aeromonas salmonicida subsp. salmonicida A449: insights into the evolution of a fish pathogen.</title>
        <authorList>
            <person name="Reith M.E."/>
            <person name="Singh R.K."/>
            <person name="Curtis B."/>
            <person name="Boyd J.M."/>
            <person name="Bouevitch A."/>
            <person name="Kimball J."/>
            <person name="Munholland J."/>
            <person name="Murphy C."/>
            <person name="Sarty D."/>
            <person name="Williams J."/>
            <person name="Nash J.H."/>
            <person name="Johnson S.C."/>
            <person name="Brown L.L."/>
        </authorList>
    </citation>
    <scope>NUCLEOTIDE SEQUENCE [LARGE SCALE GENOMIC DNA]</scope>
    <source>
        <strain>A449</strain>
    </source>
</reference>
<proteinExistence type="inferred from homology"/>
<comment type="function">
    <text evidence="1">One of the primary rRNA binding proteins, it binds directly near the 3'-end of the 23S rRNA, where it nucleates assembly of the 50S subunit.</text>
</comment>
<comment type="subunit">
    <text evidence="1">Part of the 50S ribosomal subunit. Forms a cluster with proteins L14 and L19.</text>
</comment>
<comment type="PTM">
    <text evidence="1">Methylated by PrmB.</text>
</comment>
<comment type="similarity">
    <text evidence="1">Belongs to the universal ribosomal protein uL3 family.</text>
</comment>
<sequence>MTIGLVGRKVGMTRIFTEDGVSIPVTVIEVEANRVTQVKSVETDGYNAIQVTTGAKKASRVTKPEAGHFAKAGVEAGRGLWEFRLNNGETFTVGSELKVDLLADVKMVDVTGTSKGKGFAGTVKRHNFRTQDMTHGNSLSHRAPGSIGQNQTPGRVFKGKKMAGHMGAERVTTQNLELVRVDAERNLLLIKGAVPGATNGNVIVKPAVKA</sequence>
<gene>
    <name evidence="1" type="primary">rplC</name>
    <name type="ordered locus">ASA_4087</name>
</gene>
<organism>
    <name type="scientific">Aeromonas salmonicida (strain A449)</name>
    <dbReference type="NCBI Taxonomy" id="382245"/>
    <lineage>
        <taxon>Bacteria</taxon>
        <taxon>Pseudomonadati</taxon>
        <taxon>Pseudomonadota</taxon>
        <taxon>Gammaproteobacteria</taxon>
        <taxon>Aeromonadales</taxon>
        <taxon>Aeromonadaceae</taxon>
        <taxon>Aeromonas</taxon>
    </lineage>
</organism>
<dbReference type="EMBL" id="CP000644">
    <property type="protein sequence ID" value="ABO92028.1"/>
    <property type="molecule type" value="Genomic_DNA"/>
</dbReference>
<dbReference type="RefSeq" id="WP_005319753.1">
    <property type="nucleotide sequence ID" value="NC_009348.1"/>
</dbReference>
<dbReference type="SMR" id="A4ST06"/>
<dbReference type="STRING" id="29491.GCA_000820065_03465"/>
<dbReference type="GeneID" id="92721498"/>
<dbReference type="KEGG" id="asa:ASA_4087"/>
<dbReference type="eggNOG" id="COG0087">
    <property type="taxonomic scope" value="Bacteria"/>
</dbReference>
<dbReference type="HOGENOM" id="CLU_044142_4_1_6"/>
<dbReference type="Proteomes" id="UP000000225">
    <property type="component" value="Chromosome"/>
</dbReference>
<dbReference type="GO" id="GO:0022625">
    <property type="term" value="C:cytosolic large ribosomal subunit"/>
    <property type="evidence" value="ECO:0007669"/>
    <property type="project" value="TreeGrafter"/>
</dbReference>
<dbReference type="GO" id="GO:0019843">
    <property type="term" value="F:rRNA binding"/>
    <property type="evidence" value="ECO:0007669"/>
    <property type="project" value="UniProtKB-UniRule"/>
</dbReference>
<dbReference type="GO" id="GO:0003735">
    <property type="term" value="F:structural constituent of ribosome"/>
    <property type="evidence" value="ECO:0007669"/>
    <property type="project" value="InterPro"/>
</dbReference>
<dbReference type="GO" id="GO:0006412">
    <property type="term" value="P:translation"/>
    <property type="evidence" value="ECO:0007669"/>
    <property type="project" value="UniProtKB-UniRule"/>
</dbReference>
<dbReference type="FunFam" id="2.40.30.10:FF:000004">
    <property type="entry name" value="50S ribosomal protein L3"/>
    <property type="match status" value="1"/>
</dbReference>
<dbReference type="FunFam" id="3.30.160.810:FF:000001">
    <property type="entry name" value="50S ribosomal protein L3"/>
    <property type="match status" value="1"/>
</dbReference>
<dbReference type="Gene3D" id="3.30.160.810">
    <property type="match status" value="1"/>
</dbReference>
<dbReference type="Gene3D" id="2.40.30.10">
    <property type="entry name" value="Translation factors"/>
    <property type="match status" value="1"/>
</dbReference>
<dbReference type="HAMAP" id="MF_01325_B">
    <property type="entry name" value="Ribosomal_uL3_B"/>
    <property type="match status" value="1"/>
</dbReference>
<dbReference type="InterPro" id="IPR000597">
    <property type="entry name" value="Ribosomal_uL3"/>
</dbReference>
<dbReference type="InterPro" id="IPR019927">
    <property type="entry name" value="Ribosomal_uL3_bac/org-type"/>
</dbReference>
<dbReference type="InterPro" id="IPR019926">
    <property type="entry name" value="Ribosomal_uL3_CS"/>
</dbReference>
<dbReference type="InterPro" id="IPR009000">
    <property type="entry name" value="Transl_B-barrel_sf"/>
</dbReference>
<dbReference type="NCBIfam" id="TIGR03625">
    <property type="entry name" value="L3_bact"/>
    <property type="match status" value="1"/>
</dbReference>
<dbReference type="PANTHER" id="PTHR11229">
    <property type="entry name" value="50S RIBOSOMAL PROTEIN L3"/>
    <property type="match status" value="1"/>
</dbReference>
<dbReference type="PANTHER" id="PTHR11229:SF16">
    <property type="entry name" value="LARGE RIBOSOMAL SUBUNIT PROTEIN UL3C"/>
    <property type="match status" value="1"/>
</dbReference>
<dbReference type="Pfam" id="PF00297">
    <property type="entry name" value="Ribosomal_L3"/>
    <property type="match status" value="1"/>
</dbReference>
<dbReference type="SUPFAM" id="SSF50447">
    <property type="entry name" value="Translation proteins"/>
    <property type="match status" value="1"/>
</dbReference>
<dbReference type="PROSITE" id="PS00474">
    <property type="entry name" value="RIBOSOMAL_L3"/>
    <property type="match status" value="1"/>
</dbReference>
<feature type="chain" id="PRO_1000052004" description="Large ribosomal subunit protein uL3">
    <location>
        <begin position="1"/>
        <end position="210"/>
    </location>
</feature>
<feature type="region of interest" description="Disordered" evidence="2">
    <location>
        <begin position="134"/>
        <end position="153"/>
    </location>
</feature>
<feature type="modified residue" description="N5-methylglutamine" evidence="1">
    <location>
        <position position="151"/>
    </location>
</feature>